<sequence length="70" mass="7853">MKKDIHPKYEEITASCSCGNVIKIRSTVGHDLNLDVCSKCHPFFTGKQRDVATGGRVDRFNKRFNIPGSK</sequence>
<gene>
    <name evidence="1" type="primary">rpmE</name>
    <name type="ordered locus">SF4014</name>
    <name type="ordered locus">S3733</name>
</gene>
<name>RL31_SHIFL</name>
<evidence type="ECO:0000255" key="1">
    <source>
        <dbReference type="HAMAP-Rule" id="MF_00501"/>
    </source>
</evidence>
<evidence type="ECO:0000305" key="2"/>
<feature type="chain" id="PRO_0000173161" description="Large ribosomal subunit protein bL31">
    <location>
        <begin position="1"/>
        <end position="70"/>
    </location>
</feature>
<feature type="binding site" evidence="1">
    <location>
        <position position="16"/>
    </location>
    <ligand>
        <name>Zn(2+)</name>
        <dbReference type="ChEBI" id="CHEBI:29105"/>
    </ligand>
</feature>
<feature type="binding site" evidence="1">
    <location>
        <position position="18"/>
    </location>
    <ligand>
        <name>Zn(2+)</name>
        <dbReference type="ChEBI" id="CHEBI:29105"/>
    </ligand>
</feature>
<feature type="binding site" evidence="1">
    <location>
        <position position="37"/>
    </location>
    <ligand>
        <name>Zn(2+)</name>
        <dbReference type="ChEBI" id="CHEBI:29105"/>
    </ligand>
</feature>
<feature type="binding site" evidence="1">
    <location>
        <position position="40"/>
    </location>
    <ligand>
        <name>Zn(2+)</name>
        <dbReference type="ChEBI" id="CHEBI:29105"/>
    </ligand>
</feature>
<feature type="modified residue" description="N6-acetyllysine" evidence="1">
    <location>
        <position position="8"/>
    </location>
</feature>
<organism>
    <name type="scientific">Shigella flexneri</name>
    <dbReference type="NCBI Taxonomy" id="623"/>
    <lineage>
        <taxon>Bacteria</taxon>
        <taxon>Pseudomonadati</taxon>
        <taxon>Pseudomonadota</taxon>
        <taxon>Gammaproteobacteria</taxon>
        <taxon>Enterobacterales</taxon>
        <taxon>Enterobacteriaceae</taxon>
        <taxon>Shigella</taxon>
    </lineage>
</organism>
<accession>Q83PD4</accession>
<accession>Q7BZG0</accession>
<comment type="function">
    <text evidence="1">Binds the 23S rRNA.</text>
</comment>
<comment type="cofactor">
    <cofactor evidence="1">
        <name>Zn(2+)</name>
        <dbReference type="ChEBI" id="CHEBI:29105"/>
    </cofactor>
    <text evidence="1">Binds 1 zinc ion per subunit.</text>
</comment>
<comment type="subunit">
    <text evidence="1">Part of the 50S ribosomal subunit.</text>
</comment>
<comment type="similarity">
    <text evidence="1">Belongs to the bacterial ribosomal protein bL31 family. Type A subfamily.</text>
</comment>
<protein>
    <recommendedName>
        <fullName evidence="1">Large ribosomal subunit protein bL31</fullName>
    </recommendedName>
    <alternativeName>
        <fullName evidence="2">50S ribosomal protein L31</fullName>
    </alternativeName>
</protein>
<dbReference type="EMBL" id="AE005674">
    <property type="protein sequence ID" value="AAN45447.1"/>
    <property type="molecule type" value="Genomic_DNA"/>
</dbReference>
<dbReference type="EMBL" id="AE014073">
    <property type="protein sequence ID" value="AAP18753.1"/>
    <property type="molecule type" value="Genomic_DNA"/>
</dbReference>
<dbReference type="RefSeq" id="NP_709740.1">
    <property type="nucleotide sequence ID" value="NC_004337.2"/>
</dbReference>
<dbReference type="RefSeq" id="WP_000710768.1">
    <property type="nucleotide sequence ID" value="NZ_WPGW01000012.1"/>
</dbReference>
<dbReference type="SMR" id="Q83PD4"/>
<dbReference type="STRING" id="198214.SF4014"/>
<dbReference type="PaxDb" id="198214-SF4014"/>
<dbReference type="GeneID" id="1025467"/>
<dbReference type="KEGG" id="sfl:SF4014"/>
<dbReference type="KEGG" id="sfx:S3733"/>
<dbReference type="PATRIC" id="fig|198214.7.peg.4730"/>
<dbReference type="HOGENOM" id="CLU_114306_4_3_6"/>
<dbReference type="Proteomes" id="UP000001006">
    <property type="component" value="Chromosome"/>
</dbReference>
<dbReference type="Proteomes" id="UP000002673">
    <property type="component" value="Chromosome"/>
</dbReference>
<dbReference type="GO" id="GO:1990904">
    <property type="term" value="C:ribonucleoprotein complex"/>
    <property type="evidence" value="ECO:0007669"/>
    <property type="project" value="UniProtKB-KW"/>
</dbReference>
<dbReference type="GO" id="GO:0005840">
    <property type="term" value="C:ribosome"/>
    <property type="evidence" value="ECO:0007669"/>
    <property type="project" value="UniProtKB-KW"/>
</dbReference>
<dbReference type="GO" id="GO:0046872">
    <property type="term" value="F:metal ion binding"/>
    <property type="evidence" value="ECO:0007669"/>
    <property type="project" value="UniProtKB-KW"/>
</dbReference>
<dbReference type="GO" id="GO:0019843">
    <property type="term" value="F:rRNA binding"/>
    <property type="evidence" value="ECO:0007669"/>
    <property type="project" value="UniProtKB-KW"/>
</dbReference>
<dbReference type="GO" id="GO:0003735">
    <property type="term" value="F:structural constituent of ribosome"/>
    <property type="evidence" value="ECO:0007669"/>
    <property type="project" value="InterPro"/>
</dbReference>
<dbReference type="GO" id="GO:0006412">
    <property type="term" value="P:translation"/>
    <property type="evidence" value="ECO:0007669"/>
    <property type="project" value="UniProtKB-UniRule"/>
</dbReference>
<dbReference type="FunFam" id="4.10.830.30:FF:000001">
    <property type="entry name" value="50S ribosomal protein L31"/>
    <property type="match status" value="1"/>
</dbReference>
<dbReference type="Gene3D" id="4.10.830.30">
    <property type="entry name" value="Ribosomal protein L31"/>
    <property type="match status" value="1"/>
</dbReference>
<dbReference type="HAMAP" id="MF_00501">
    <property type="entry name" value="Ribosomal_bL31_1"/>
    <property type="match status" value="1"/>
</dbReference>
<dbReference type="InterPro" id="IPR034704">
    <property type="entry name" value="Ribosomal_bL28/bL31-like_sf"/>
</dbReference>
<dbReference type="InterPro" id="IPR002150">
    <property type="entry name" value="Ribosomal_bL31"/>
</dbReference>
<dbReference type="InterPro" id="IPR027491">
    <property type="entry name" value="Ribosomal_bL31_A"/>
</dbReference>
<dbReference type="InterPro" id="IPR042105">
    <property type="entry name" value="Ribosomal_bL31_sf"/>
</dbReference>
<dbReference type="NCBIfam" id="TIGR00105">
    <property type="entry name" value="L31"/>
    <property type="match status" value="1"/>
</dbReference>
<dbReference type="NCBIfam" id="NF000612">
    <property type="entry name" value="PRK00019.1"/>
    <property type="match status" value="1"/>
</dbReference>
<dbReference type="NCBIfam" id="NF001809">
    <property type="entry name" value="PRK00528.1"/>
    <property type="match status" value="1"/>
</dbReference>
<dbReference type="PANTHER" id="PTHR33280">
    <property type="entry name" value="50S RIBOSOMAL PROTEIN L31, CHLOROPLASTIC"/>
    <property type="match status" value="1"/>
</dbReference>
<dbReference type="PANTHER" id="PTHR33280:SF6">
    <property type="entry name" value="LARGE RIBOSOMAL SUBUNIT PROTEIN BL31A"/>
    <property type="match status" value="1"/>
</dbReference>
<dbReference type="Pfam" id="PF01197">
    <property type="entry name" value="Ribosomal_L31"/>
    <property type="match status" value="1"/>
</dbReference>
<dbReference type="PRINTS" id="PR01249">
    <property type="entry name" value="RIBOSOMALL31"/>
</dbReference>
<dbReference type="SUPFAM" id="SSF143800">
    <property type="entry name" value="L28p-like"/>
    <property type="match status" value="1"/>
</dbReference>
<dbReference type="PROSITE" id="PS01143">
    <property type="entry name" value="RIBOSOMAL_L31"/>
    <property type="match status" value="1"/>
</dbReference>
<proteinExistence type="inferred from homology"/>
<keyword id="KW-0007">Acetylation</keyword>
<keyword id="KW-0479">Metal-binding</keyword>
<keyword id="KW-1185">Reference proteome</keyword>
<keyword id="KW-0687">Ribonucleoprotein</keyword>
<keyword id="KW-0689">Ribosomal protein</keyword>
<keyword id="KW-0694">RNA-binding</keyword>
<keyword id="KW-0699">rRNA-binding</keyword>
<keyword id="KW-0862">Zinc</keyword>
<reference key="1">
    <citation type="journal article" date="2002" name="Nucleic Acids Res.">
        <title>Genome sequence of Shigella flexneri 2a: insights into pathogenicity through comparison with genomes of Escherichia coli K12 and O157.</title>
        <authorList>
            <person name="Jin Q."/>
            <person name="Yuan Z."/>
            <person name="Xu J."/>
            <person name="Wang Y."/>
            <person name="Shen Y."/>
            <person name="Lu W."/>
            <person name="Wang J."/>
            <person name="Liu H."/>
            <person name="Yang J."/>
            <person name="Yang F."/>
            <person name="Zhang X."/>
            <person name="Zhang J."/>
            <person name="Yang G."/>
            <person name="Wu H."/>
            <person name="Qu D."/>
            <person name="Dong J."/>
            <person name="Sun L."/>
            <person name="Xue Y."/>
            <person name="Zhao A."/>
            <person name="Gao Y."/>
            <person name="Zhu J."/>
            <person name="Kan B."/>
            <person name="Ding K."/>
            <person name="Chen S."/>
            <person name="Cheng H."/>
            <person name="Yao Z."/>
            <person name="He B."/>
            <person name="Chen R."/>
            <person name="Ma D."/>
            <person name="Qiang B."/>
            <person name="Wen Y."/>
            <person name="Hou Y."/>
            <person name="Yu J."/>
        </authorList>
    </citation>
    <scope>NUCLEOTIDE SEQUENCE [LARGE SCALE GENOMIC DNA]</scope>
    <source>
        <strain>301 / Serotype 2a</strain>
    </source>
</reference>
<reference key="2">
    <citation type="journal article" date="2003" name="Infect. Immun.">
        <title>Complete genome sequence and comparative genomics of Shigella flexneri serotype 2a strain 2457T.</title>
        <authorList>
            <person name="Wei J."/>
            <person name="Goldberg M.B."/>
            <person name="Burland V."/>
            <person name="Venkatesan M.M."/>
            <person name="Deng W."/>
            <person name="Fournier G."/>
            <person name="Mayhew G.F."/>
            <person name="Plunkett G. III"/>
            <person name="Rose D.J."/>
            <person name="Darling A."/>
            <person name="Mau B."/>
            <person name="Perna N.T."/>
            <person name="Payne S.M."/>
            <person name="Runyen-Janecky L.J."/>
            <person name="Zhou S."/>
            <person name="Schwartz D.C."/>
            <person name="Blattner F.R."/>
        </authorList>
    </citation>
    <scope>NUCLEOTIDE SEQUENCE [LARGE SCALE GENOMIC DNA]</scope>
    <source>
        <strain>ATCC 700930 / 2457T / Serotype 2a</strain>
    </source>
</reference>